<comment type="function">
    <text evidence="2 3">In muscle, parvalbumin is thought to be involved in relaxation after contraction. It binds two calcium ions (By similarity).</text>
</comment>
<comment type="mass spectrometry"/>
<comment type="miscellaneous">
    <text evidence="2 6">Is regarded as an important allergen.</text>
</comment>
<comment type="miscellaneous">
    <text evidence="6">On the 2D-gel the determined pI of this protein is: 4.05, its MW is: 11.35 kDa.</text>
</comment>
<comment type="similarity">
    <text evidence="4">Belongs to the parvalbumin family.</text>
</comment>
<dbReference type="SMR" id="P86741"/>
<dbReference type="iPTMnet" id="P86741"/>
<dbReference type="GO" id="GO:0005737">
    <property type="term" value="C:cytoplasm"/>
    <property type="evidence" value="ECO:0007669"/>
    <property type="project" value="TreeGrafter"/>
</dbReference>
<dbReference type="GO" id="GO:0005509">
    <property type="term" value="F:calcium ion binding"/>
    <property type="evidence" value="ECO:0007669"/>
    <property type="project" value="InterPro"/>
</dbReference>
<dbReference type="FunFam" id="1.10.238.10:FF:000060">
    <property type="entry name" value="Parvalbumin, thymic"/>
    <property type="match status" value="1"/>
</dbReference>
<dbReference type="Gene3D" id="1.10.238.10">
    <property type="entry name" value="EF-hand"/>
    <property type="match status" value="1"/>
</dbReference>
<dbReference type="InterPro" id="IPR011992">
    <property type="entry name" value="EF-hand-dom_pair"/>
</dbReference>
<dbReference type="InterPro" id="IPR018247">
    <property type="entry name" value="EF_Hand_1_Ca_BS"/>
</dbReference>
<dbReference type="InterPro" id="IPR002048">
    <property type="entry name" value="EF_hand_dom"/>
</dbReference>
<dbReference type="InterPro" id="IPR008080">
    <property type="entry name" value="Parvalbumin"/>
</dbReference>
<dbReference type="PANTHER" id="PTHR11653:SF12">
    <property type="entry name" value="PARVALBUMIN"/>
    <property type="match status" value="1"/>
</dbReference>
<dbReference type="PANTHER" id="PTHR11653">
    <property type="entry name" value="PARVALBUMIN ALPHA"/>
    <property type="match status" value="1"/>
</dbReference>
<dbReference type="Pfam" id="PF13499">
    <property type="entry name" value="EF-hand_7"/>
    <property type="match status" value="1"/>
</dbReference>
<dbReference type="PRINTS" id="PR01697">
    <property type="entry name" value="PARVALBUMIN"/>
</dbReference>
<dbReference type="SMART" id="SM00054">
    <property type="entry name" value="EFh"/>
    <property type="match status" value="2"/>
</dbReference>
<dbReference type="SUPFAM" id="SSF47473">
    <property type="entry name" value="EF-hand"/>
    <property type="match status" value="1"/>
</dbReference>
<dbReference type="PROSITE" id="PS00018">
    <property type="entry name" value="EF_HAND_1"/>
    <property type="match status" value="2"/>
</dbReference>
<dbReference type="PROSITE" id="PS50222">
    <property type="entry name" value="EF_HAND_2"/>
    <property type="match status" value="2"/>
</dbReference>
<keyword id="KW-0007">Acetylation</keyword>
<keyword id="KW-0020">Allergen</keyword>
<keyword id="KW-0106">Calcium</keyword>
<keyword id="KW-0903">Direct protein sequencing</keyword>
<keyword id="KW-0479">Metal-binding</keyword>
<keyword id="KW-0514">Muscle protein</keyword>
<keyword id="KW-0677">Repeat</keyword>
<organism>
    <name type="scientific">Macruronus magellanicus</name>
    <name type="common">Patagonian grenadier</name>
    <name type="synonym">Macruronus novaezelandiae magellanicus</name>
    <dbReference type="NCBI Taxonomy" id="92050"/>
    <lineage>
        <taxon>Eukaryota</taxon>
        <taxon>Metazoa</taxon>
        <taxon>Chordata</taxon>
        <taxon>Craniata</taxon>
        <taxon>Vertebrata</taxon>
        <taxon>Euteleostomi</taxon>
        <taxon>Actinopterygii</taxon>
        <taxon>Neopterygii</taxon>
        <taxon>Teleostei</taxon>
        <taxon>Neoteleostei</taxon>
        <taxon>Acanthomorphata</taxon>
        <taxon>Zeiogadaria</taxon>
        <taxon>Gadariae</taxon>
        <taxon>Gadiformes</taxon>
        <taxon>Gadoidei</taxon>
        <taxon>Merlucciidae</taxon>
        <taxon>Macruronus</taxon>
    </lineage>
</organism>
<reference evidence="8" key="1">
    <citation type="journal article" date="2010" name="J. Proteome Res.">
        <title>Extensive de novo sequencing of new parvalbumin isoforms using a novel combination of bottom-up proteomics, accurate molecular mass measurement by FTICR-MS, and selected MS/MS ion monitoring.</title>
        <authorList>
            <person name="Carrera M."/>
            <person name="Canas B."/>
            <person name="Vazquez J."/>
            <person name="Gallardo J.M."/>
        </authorList>
    </citation>
    <scope>PROTEIN SEQUENCE</scope>
    <scope>MASS SPECTROMETRY</scope>
    <scope>ACETYLATION AT ALA-1</scope>
    <source>
        <tissue evidence="6">Muscle</tissue>
    </source>
</reference>
<sequence>AFAGILADADCAAALKACEAADSFNYKAFFAKVGLASKSAEEIKKAFFVIDQDKSGFIEEDELKLFLQNFVAGARALTDAETKAFLKAGDSDGDGAIGVDEFAALVKA</sequence>
<name>PRVB2_MACMG</name>
<accession>P86741</accession>
<evidence type="ECO:0000250" key="1">
    <source>
        <dbReference type="UniProtKB" id="P02621"/>
    </source>
</evidence>
<evidence type="ECO:0000250" key="2">
    <source>
        <dbReference type="UniProtKB" id="P02622"/>
    </source>
</evidence>
<evidence type="ECO:0000250" key="3">
    <source>
        <dbReference type="UniProtKB" id="P02624"/>
    </source>
</evidence>
<evidence type="ECO:0000255" key="4"/>
<evidence type="ECO:0000255" key="5">
    <source>
        <dbReference type="PROSITE-ProRule" id="PRU00448"/>
    </source>
</evidence>
<evidence type="ECO:0000269" key="6">
    <source>
    </source>
</evidence>
<evidence type="ECO:0000303" key="7">
    <source>
    </source>
</evidence>
<evidence type="ECO:0000305" key="8"/>
<feature type="chain" id="PRO_0000399400" description="Parvalbumin beta 2">
    <location>
        <begin position="1"/>
        <end position="108"/>
    </location>
</feature>
<feature type="domain" description="EF-hand 1" evidence="5">
    <location>
        <begin position="38"/>
        <end position="73"/>
    </location>
</feature>
<feature type="domain" description="EF-hand 2" evidence="5">
    <location>
        <begin position="77"/>
        <end position="108"/>
    </location>
</feature>
<feature type="binding site" evidence="5">
    <location>
        <position position="51"/>
    </location>
    <ligand>
        <name>Ca(2+)</name>
        <dbReference type="ChEBI" id="CHEBI:29108"/>
        <label>1</label>
    </ligand>
</feature>
<feature type="binding site" evidence="5">
    <location>
        <position position="53"/>
    </location>
    <ligand>
        <name>Ca(2+)</name>
        <dbReference type="ChEBI" id="CHEBI:29108"/>
        <label>1</label>
    </ligand>
</feature>
<feature type="binding site" evidence="5">
    <location>
        <position position="55"/>
    </location>
    <ligand>
        <name>Ca(2+)</name>
        <dbReference type="ChEBI" id="CHEBI:29108"/>
        <label>1</label>
    </ligand>
</feature>
<feature type="binding site" evidence="1">
    <location>
        <position position="57"/>
    </location>
    <ligand>
        <name>Ca(2+)</name>
        <dbReference type="ChEBI" id="CHEBI:29108"/>
        <label>1</label>
    </ligand>
</feature>
<feature type="binding site" evidence="1">
    <location>
        <position position="59"/>
    </location>
    <ligand>
        <name>Ca(2+)</name>
        <dbReference type="ChEBI" id="CHEBI:29108"/>
        <label>1</label>
    </ligand>
</feature>
<feature type="binding site" evidence="5">
    <location>
        <position position="62"/>
    </location>
    <ligand>
        <name>Ca(2+)</name>
        <dbReference type="ChEBI" id="CHEBI:29108"/>
        <label>1</label>
    </ligand>
</feature>
<feature type="binding site" evidence="5">
    <location>
        <position position="90"/>
    </location>
    <ligand>
        <name>Ca(2+)</name>
        <dbReference type="ChEBI" id="CHEBI:29108"/>
        <label>2</label>
    </ligand>
</feature>
<feature type="binding site" evidence="5">
    <location>
        <position position="92"/>
    </location>
    <ligand>
        <name>Ca(2+)</name>
        <dbReference type="ChEBI" id="CHEBI:29108"/>
        <label>2</label>
    </ligand>
</feature>
<feature type="binding site" evidence="5">
    <location>
        <position position="94"/>
    </location>
    <ligand>
        <name>Ca(2+)</name>
        <dbReference type="ChEBI" id="CHEBI:29108"/>
        <label>2</label>
    </ligand>
</feature>
<feature type="binding site" evidence="1">
    <location>
        <position position="96"/>
    </location>
    <ligand>
        <name>Ca(2+)</name>
        <dbReference type="ChEBI" id="CHEBI:29108"/>
        <label>2</label>
    </ligand>
</feature>
<feature type="binding site" evidence="5">
    <location>
        <position position="101"/>
    </location>
    <ligand>
        <name>Ca(2+)</name>
        <dbReference type="ChEBI" id="CHEBI:29108"/>
        <label>2</label>
    </ligand>
</feature>
<feature type="modified residue" description="N-acetylalanine" evidence="6">
    <location>
        <position position="1"/>
    </location>
</feature>
<feature type="unsure residue" description="I or L" evidence="6">
    <location>
        <position position="5"/>
    </location>
</feature>
<feature type="unsure residue" description="L or I" evidence="6">
    <location>
        <position position="6"/>
    </location>
</feature>
<feature type="unsure residue" description="L or I" evidence="6">
    <location>
        <position position="15"/>
    </location>
</feature>
<feature type="unsure residue" description="K or Q" evidence="6">
    <location>
        <position position="16"/>
    </location>
</feature>
<feature type="unsure residue" description="K or Q" evidence="6">
    <location>
        <position position="27"/>
    </location>
</feature>
<feature type="unsure residue" description="K or Q" evidence="6">
    <location>
        <position position="32"/>
    </location>
</feature>
<feature type="unsure residue" description="L or I" evidence="6">
    <location>
        <position position="35"/>
    </location>
</feature>
<feature type="unsure residue" description="K or Q" evidence="6">
    <location>
        <position position="38"/>
    </location>
</feature>
<feature type="unsure residue" description="I or L" evidence="6">
    <location>
        <position position="43"/>
    </location>
</feature>
<feature type="unsure residue" description="K or Q" evidence="6">
    <location>
        <position position="44"/>
    </location>
</feature>
<feature type="unsure residue" description="K or Q" evidence="6">
    <location>
        <position position="45"/>
    </location>
</feature>
<feature type="unsure residue" description="I or L" evidence="6">
    <location>
        <position position="50"/>
    </location>
</feature>
<feature type="unsure residue" description="Q or K" evidence="6">
    <location>
        <position position="52"/>
    </location>
</feature>
<feature type="unsure residue" description="K or Q" evidence="6">
    <location>
        <position position="54"/>
    </location>
</feature>
<feature type="unsure residue" description="I or L" evidence="6">
    <location>
        <position position="58"/>
    </location>
</feature>
<feature type="unsure residue" description="L or I" evidence="6">
    <location>
        <position position="63"/>
    </location>
</feature>
<feature type="unsure residue" description="K or Q" evidence="6">
    <location>
        <position position="64"/>
    </location>
</feature>
<feature type="unsure residue" description="L or I" evidence="6">
    <location>
        <position position="65"/>
    </location>
</feature>
<feature type="unsure residue" description="L or I" evidence="6">
    <location>
        <position position="67"/>
    </location>
</feature>
<feature type="unsure residue" description="Q or K" evidence="6">
    <location>
        <position position="68"/>
    </location>
</feature>
<feature type="unsure residue" description="L or I" evidence="6">
    <location>
        <position position="77"/>
    </location>
</feature>
<feature type="unsure residue" description="K or Q" evidence="6">
    <location>
        <position position="83"/>
    </location>
</feature>
<feature type="unsure residue" description="L or I" evidence="6">
    <location>
        <position position="86"/>
    </location>
</feature>
<feature type="unsure residue" description="K or Q" evidence="6">
    <location>
        <position position="87"/>
    </location>
</feature>
<feature type="unsure residue" description="I or L" evidence="6">
    <location>
        <position position="97"/>
    </location>
</feature>
<feature type="unsure residue" description="L or I" evidence="6">
    <location>
        <position position="105"/>
    </location>
</feature>
<feature type="unsure residue" description="K or Q" evidence="6">
    <location>
        <position position="107"/>
    </location>
</feature>
<proteinExistence type="evidence at protein level"/>
<protein>
    <recommendedName>
        <fullName evidence="7">Parvalbumin beta 2</fullName>
    </recommendedName>
</protein>